<keyword id="KW-0687">Ribonucleoprotein</keyword>
<keyword id="KW-0689">Ribosomal protein</keyword>
<keyword id="KW-0694">RNA-binding</keyword>
<keyword id="KW-0699">rRNA-binding</keyword>
<dbReference type="EMBL" id="BA000037">
    <property type="protein sequence ID" value="BAC95748.1"/>
    <property type="status" value="ALT_INIT"/>
    <property type="molecule type" value="Genomic_DNA"/>
</dbReference>
<dbReference type="RefSeq" id="WP_011079362.1">
    <property type="nucleotide sequence ID" value="NC_005139.1"/>
</dbReference>
<dbReference type="SMR" id="Q7MH88"/>
<dbReference type="STRING" id="672.VV93_v1c27130"/>
<dbReference type="GeneID" id="93895651"/>
<dbReference type="KEGG" id="vvy:VV2984"/>
<dbReference type="eggNOG" id="COG0360">
    <property type="taxonomic scope" value="Bacteria"/>
</dbReference>
<dbReference type="HOGENOM" id="CLU_113441_6_1_6"/>
<dbReference type="Proteomes" id="UP000002675">
    <property type="component" value="Chromosome I"/>
</dbReference>
<dbReference type="GO" id="GO:0022627">
    <property type="term" value="C:cytosolic small ribosomal subunit"/>
    <property type="evidence" value="ECO:0007669"/>
    <property type="project" value="TreeGrafter"/>
</dbReference>
<dbReference type="GO" id="GO:0070181">
    <property type="term" value="F:small ribosomal subunit rRNA binding"/>
    <property type="evidence" value="ECO:0007669"/>
    <property type="project" value="TreeGrafter"/>
</dbReference>
<dbReference type="GO" id="GO:0003735">
    <property type="term" value="F:structural constituent of ribosome"/>
    <property type="evidence" value="ECO:0007669"/>
    <property type="project" value="InterPro"/>
</dbReference>
<dbReference type="GO" id="GO:0006412">
    <property type="term" value="P:translation"/>
    <property type="evidence" value="ECO:0007669"/>
    <property type="project" value="UniProtKB-UniRule"/>
</dbReference>
<dbReference type="CDD" id="cd00473">
    <property type="entry name" value="bS6"/>
    <property type="match status" value="1"/>
</dbReference>
<dbReference type="FunFam" id="3.30.70.60:FF:000003">
    <property type="entry name" value="30S ribosomal protein S6"/>
    <property type="match status" value="1"/>
</dbReference>
<dbReference type="Gene3D" id="3.30.70.60">
    <property type="match status" value="1"/>
</dbReference>
<dbReference type="HAMAP" id="MF_00360">
    <property type="entry name" value="Ribosomal_bS6"/>
    <property type="match status" value="1"/>
</dbReference>
<dbReference type="InterPro" id="IPR000529">
    <property type="entry name" value="Ribosomal_bS6"/>
</dbReference>
<dbReference type="InterPro" id="IPR020815">
    <property type="entry name" value="Ribosomal_bS6_CS"/>
</dbReference>
<dbReference type="InterPro" id="IPR035980">
    <property type="entry name" value="Ribosomal_bS6_sf"/>
</dbReference>
<dbReference type="InterPro" id="IPR020814">
    <property type="entry name" value="Ribosomal_S6_plastid/chlpt"/>
</dbReference>
<dbReference type="InterPro" id="IPR014717">
    <property type="entry name" value="Transl_elong_EF1B/ribsomal_bS6"/>
</dbReference>
<dbReference type="NCBIfam" id="TIGR00166">
    <property type="entry name" value="S6"/>
    <property type="match status" value="1"/>
</dbReference>
<dbReference type="PANTHER" id="PTHR21011">
    <property type="entry name" value="MITOCHONDRIAL 28S RIBOSOMAL PROTEIN S6"/>
    <property type="match status" value="1"/>
</dbReference>
<dbReference type="PANTHER" id="PTHR21011:SF1">
    <property type="entry name" value="SMALL RIBOSOMAL SUBUNIT PROTEIN BS6M"/>
    <property type="match status" value="1"/>
</dbReference>
<dbReference type="Pfam" id="PF01250">
    <property type="entry name" value="Ribosomal_S6"/>
    <property type="match status" value="1"/>
</dbReference>
<dbReference type="SUPFAM" id="SSF54995">
    <property type="entry name" value="Ribosomal protein S6"/>
    <property type="match status" value="1"/>
</dbReference>
<dbReference type="PROSITE" id="PS01048">
    <property type="entry name" value="RIBOSOMAL_S6"/>
    <property type="match status" value="1"/>
</dbReference>
<evidence type="ECO:0000255" key="1">
    <source>
        <dbReference type="HAMAP-Rule" id="MF_00360"/>
    </source>
</evidence>
<evidence type="ECO:0000256" key="2">
    <source>
        <dbReference type="SAM" id="MobiDB-lite"/>
    </source>
</evidence>
<evidence type="ECO:0000305" key="3"/>
<protein>
    <recommendedName>
        <fullName evidence="1">Small ribosomal subunit protein bS6</fullName>
    </recommendedName>
    <alternativeName>
        <fullName evidence="3">30S ribosomal protein S6</fullName>
    </alternativeName>
</protein>
<accession>Q7MH88</accession>
<gene>
    <name evidence="1" type="primary">rpsF</name>
    <name type="ordered locus">VV2984</name>
</gene>
<sequence>MRHYEIVFMVHPDQSEQVAGMIERYTGSITEAGGKIHRLEDWGRRQLAYPINKLHKAHYVLMNVEADQAVIDELETAFRYNDAVLRNMIMRTKAAITEPSIMLKQKEERAPRREAEAKEFAAE</sequence>
<organism>
    <name type="scientific">Vibrio vulnificus (strain YJ016)</name>
    <dbReference type="NCBI Taxonomy" id="196600"/>
    <lineage>
        <taxon>Bacteria</taxon>
        <taxon>Pseudomonadati</taxon>
        <taxon>Pseudomonadota</taxon>
        <taxon>Gammaproteobacteria</taxon>
        <taxon>Vibrionales</taxon>
        <taxon>Vibrionaceae</taxon>
        <taxon>Vibrio</taxon>
    </lineage>
</organism>
<feature type="chain" id="PRO_0000176874" description="Small ribosomal subunit protein bS6">
    <location>
        <begin position="1"/>
        <end position="123"/>
    </location>
</feature>
<feature type="region of interest" description="Disordered" evidence="2">
    <location>
        <begin position="102"/>
        <end position="123"/>
    </location>
</feature>
<feature type="compositionally biased region" description="Basic and acidic residues" evidence="2">
    <location>
        <begin position="104"/>
        <end position="123"/>
    </location>
</feature>
<proteinExistence type="inferred from homology"/>
<comment type="function">
    <text evidence="1">Binds together with bS18 to 16S ribosomal RNA.</text>
</comment>
<comment type="similarity">
    <text evidence="1">Belongs to the bacterial ribosomal protein bS6 family.</text>
</comment>
<comment type="sequence caution" evidence="3">
    <conflict type="erroneous initiation">
        <sequence resource="EMBL-CDS" id="BAC95748"/>
    </conflict>
</comment>
<reference key="1">
    <citation type="journal article" date="2003" name="Genome Res.">
        <title>Comparative genome analysis of Vibrio vulnificus, a marine pathogen.</title>
        <authorList>
            <person name="Chen C.-Y."/>
            <person name="Wu K.-M."/>
            <person name="Chang Y.-C."/>
            <person name="Chang C.-H."/>
            <person name="Tsai H.-C."/>
            <person name="Liao T.-L."/>
            <person name="Liu Y.-M."/>
            <person name="Chen H.-J."/>
            <person name="Shen A.B.-T."/>
            <person name="Li J.-C."/>
            <person name="Su T.-L."/>
            <person name="Shao C.-P."/>
            <person name="Lee C.-T."/>
            <person name="Hor L.-I."/>
            <person name="Tsai S.-F."/>
        </authorList>
    </citation>
    <scope>NUCLEOTIDE SEQUENCE [LARGE SCALE GENOMIC DNA]</scope>
    <source>
        <strain>YJ016</strain>
    </source>
</reference>
<name>RS6_VIBVY</name>